<proteinExistence type="inferred from homology"/>
<comment type="function">
    <text evidence="1">NAD-binding protein involved in the addition of a carboxymethylaminomethyl (cmnm) group at the wobble position (U34) of certain tRNAs, forming tRNA-cmnm(5)s(2)U34.</text>
</comment>
<comment type="cofactor">
    <cofactor evidence="1">
        <name>FAD</name>
        <dbReference type="ChEBI" id="CHEBI:57692"/>
    </cofactor>
</comment>
<comment type="subunit">
    <text evidence="1">Homodimer. Heterotetramer of two MnmE and two MnmG subunits.</text>
</comment>
<comment type="subcellular location">
    <subcellularLocation>
        <location evidence="1">Cytoplasm</location>
    </subcellularLocation>
</comment>
<comment type="similarity">
    <text evidence="1">Belongs to the MnmG family.</text>
</comment>
<comment type="sequence caution" evidence="2">
    <conflict type="erroneous initiation">
        <sequence resource="EMBL-CDS" id="ABX74082"/>
    </conflict>
</comment>
<protein>
    <recommendedName>
        <fullName evidence="1">tRNA uridine 5-carboxymethylaminomethyl modification enzyme MnmG</fullName>
    </recommendedName>
    <alternativeName>
        <fullName evidence="1">Glucose-inhibited division protein A</fullName>
    </alternativeName>
</protein>
<keyword id="KW-0963">Cytoplasm</keyword>
<keyword id="KW-0274">FAD</keyword>
<keyword id="KW-0285">Flavoprotein</keyword>
<keyword id="KW-0520">NAD</keyword>
<keyword id="KW-0819">tRNA processing</keyword>
<reference key="1">
    <citation type="journal article" date="2008" name="Genomics">
        <title>Characterization of ST-4821 complex, a unique Neisseria meningitidis clone.</title>
        <authorList>
            <person name="Peng J."/>
            <person name="Yang L."/>
            <person name="Yang F."/>
            <person name="Yang J."/>
            <person name="Yan Y."/>
            <person name="Nie H."/>
            <person name="Zhang X."/>
            <person name="Xiong Z."/>
            <person name="Jiang Y."/>
            <person name="Cheng F."/>
            <person name="Xu X."/>
            <person name="Chen S."/>
            <person name="Sun L."/>
            <person name="Li W."/>
            <person name="Shen Y."/>
            <person name="Shao Z."/>
            <person name="Liang X."/>
            <person name="Xu J."/>
            <person name="Jin Q."/>
        </authorList>
    </citation>
    <scope>NUCLEOTIDE SEQUENCE [LARGE SCALE GENOMIC DNA]</scope>
    <source>
        <strain>053442</strain>
    </source>
</reference>
<gene>
    <name evidence="1" type="primary">mnmG</name>
    <name evidence="1" type="synonym">gidA</name>
    <name type="ordered locus">NMCC_1957</name>
</gene>
<organism>
    <name type="scientific">Neisseria meningitidis serogroup C (strain 053442)</name>
    <dbReference type="NCBI Taxonomy" id="374833"/>
    <lineage>
        <taxon>Bacteria</taxon>
        <taxon>Pseudomonadati</taxon>
        <taxon>Pseudomonadota</taxon>
        <taxon>Betaproteobacteria</taxon>
        <taxon>Neisseriales</taxon>
        <taxon>Neisseriaceae</taxon>
        <taxon>Neisseria</taxon>
    </lineage>
</organism>
<accession>A9M3R4</accession>
<name>MNMG_NEIM0</name>
<evidence type="ECO:0000255" key="1">
    <source>
        <dbReference type="HAMAP-Rule" id="MF_00129"/>
    </source>
</evidence>
<evidence type="ECO:0000305" key="2"/>
<feature type="chain" id="PRO_0000345305" description="tRNA uridine 5-carboxymethylaminomethyl modification enzyme MnmG">
    <location>
        <begin position="1"/>
        <end position="628"/>
    </location>
</feature>
<feature type="binding site" evidence="1">
    <location>
        <begin position="13"/>
        <end position="18"/>
    </location>
    <ligand>
        <name>FAD</name>
        <dbReference type="ChEBI" id="CHEBI:57692"/>
    </ligand>
</feature>
<feature type="binding site" evidence="1">
    <location>
        <begin position="273"/>
        <end position="287"/>
    </location>
    <ligand>
        <name>NAD(+)</name>
        <dbReference type="ChEBI" id="CHEBI:57540"/>
    </ligand>
</feature>
<sequence length="628" mass="69769">MIYPKTYDVIVVGGGHAGTEAALAAARMGAQTLLLTHNIETLGQMSCNPSIGGIGKGHLVRELDALGGAMALATDKSGIQFRRLNASKGAAVRATRAQADRILYKAAIREMLENQENLDLFQQAVEDVTLDGDRISGVITAMGVEFKARAVVLTAGTFLSGKIHIGLENYEGGRAGDPAAKSLGGRLRELKLPQGRLKTGTPPRIDGRTIDFSQLTEQPGDTPVPVMSVRGNAEMHPRQVSCWITHTNTQTHDIIRSGFDRSPMFTGKIEGVGPRYCPSIEDKINRFADKDSHQIFLEPEGLTTHEYYPNGISTSLPFDIQIALVRSMKGLENAHILRPGYAIEYDYFDPRNLKASLETKTIQGLFFAGQINGTTGYEEAAAQGLLAGANAVQYVREQDPLLLRREQAYLGVLVDDLITKGVNEPYRMFTSRAEYRLQLREDNADMRLTEDGYKIGLVGEEQWRMFNEKREAIEREIQRLKTTWYTPQKLAEDEQIRVFGQKLSREANLHDLLRRPNLDYAALMTLEGAMPSENLSAEVIEQVEIQVKYQGYIDRQNEEIDSRRDIETLKLPDDIDYSKVKGLSAEVQQKLNQHKPETVGQASRISGVTPAAVALLMVHLKRGFKDAK</sequence>
<dbReference type="EMBL" id="CP000381">
    <property type="protein sequence ID" value="ABX74082.1"/>
    <property type="status" value="ALT_INIT"/>
    <property type="molecule type" value="Genomic_DNA"/>
</dbReference>
<dbReference type="SMR" id="A9M3R4"/>
<dbReference type="KEGG" id="nmn:NMCC_1957"/>
<dbReference type="HOGENOM" id="CLU_007831_2_2_4"/>
<dbReference type="Proteomes" id="UP000001177">
    <property type="component" value="Chromosome"/>
</dbReference>
<dbReference type="GO" id="GO:0005829">
    <property type="term" value="C:cytosol"/>
    <property type="evidence" value="ECO:0007669"/>
    <property type="project" value="TreeGrafter"/>
</dbReference>
<dbReference type="GO" id="GO:0050660">
    <property type="term" value="F:flavin adenine dinucleotide binding"/>
    <property type="evidence" value="ECO:0007669"/>
    <property type="project" value="UniProtKB-UniRule"/>
</dbReference>
<dbReference type="GO" id="GO:0030488">
    <property type="term" value="P:tRNA methylation"/>
    <property type="evidence" value="ECO:0007669"/>
    <property type="project" value="TreeGrafter"/>
</dbReference>
<dbReference type="GO" id="GO:0002098">
    <property type="term" value="P:tRNA wobble uridine modification"/>
    <property type="evidence" value="ECO:0007669"/>
    <property type="project" value="InterPro"/>
</dbReference>
<dbReference type="FunFam" id="1.10.10.1800:FF:000001">
    <property type="entry name" value="tRNA uridine 5-carboxymethylaminomethyl modification enzyme MnmG"/>
    <property type="match status" value="1"/>
</dbReference>
<dbReference type="FunFam" id="1.10.150.570:FF:000001">
    <property type="entry name" value="tRNA uridine 5-carboxymethylaminomethyl modification enzyme MnmG"/>
    <property type="match status" value="1"/>
</dbReference>
<dbReference type="FunFam" id="3.50.50.60:FF:000002">
    <property type="entry name" value="tRNA uridine 5-carboxymethylaminomethyl modification enzyme MnmG"/>
    <property type="match status" value="1"/>
</dbReference>
<dbReference type="FunFam" id="3.50.50.60:FF:000010">
    <property type="entry name" value="tRNA uridine 5-carboxymethylaminomethyl modification enzyme MnmG"/>
    <property type="match status" value="1"/>
</dbReference>
<dbReference type="Gene3D" id="3.50.50.60">
    <property type="entry name" value="FAD/NAD(P)-binding domain"/>
    <property type="match status" value="2"/>
</dbReference>
<dbReference type="Gene3D" id="1.10.150.570">
    <property type="entry name" value="GidA associated domain, C-terminal subdomain"/>
    <property type="match status" value="1"/>
</dbReference>
<dbReference type="Gene3D" id="1.10.10.1800">
    <property type="entry name" value="tRNA uridine 5-carboxymethylaminomethyl modification enzyme MnmG/GidA"/>
    <property type="match status" value="1"/>
</dbReference>
<dbReference type="HAMAP" id="MF_00129">
    <property type="entry name" value="MnmG_GidA"/>
    <property type="match status" value="1"/>
</dbReference>
<dbReference type="InterPro" id="IPR036188">
    <property type="entry name" value="FAD/NAD-bd_sf"/>
</dbReference>
<dbReference type="InterPro" id="IPR049312">
    <property type="entry name" value="GIDA_C_N"/>
</dbReference>
<dbReference type="InterPro" id="IPR004416">
    <property type="entry name" value="MnmG"/>
</dbReference>
<dbReference type="InterPro" id="IPR002218">
    <property type="entry name" value="MnmG-rel"/>
</dbReference>
<dbReference type="InterPro" id="IPR020595">
    <property type="entry name" value="MnmG-rel_CS"/>
</dbReference>
<dbReference type="InterPro" id="IPR026904">
    <property type="entry name" value="MnmG_C"/>
</dbReference>
<dbReference type="InterPro" id="IPR047001">
    <property type="entry name" value="MnmG_C_subdom"/>
</dbReference>
<dbReference type="InterPro" id="IPR044920">
    <property type="entry name" value="MnmG_C_subdom_sf"/>
</dbReference>
<dbReference type="InterPro" id="IPR040131">
    <property type="entry name" value="MnmG_N"/>
</dbReference>
<dbReference type="NCBIfam" id="TIGR00136">
    <property type="entry name" value="mnmG_gidA"/>
    <property type="match status" value="1"/>
</dbReference>
<dbReference type="PANTHER" id="PTHR11806">
    <property type="entry name" value="GLUCOSE INHIBITED DIVISION PROTEIN A"/>
    <property type="match status" value="1"/>
</dbReference>
<dbReference type="PANTHER" id="PTHR11806:SF0">
    <property type="entry name" value="PROTEIN MTO1 HOMOLOG, MITOCHONDRIAL"/>
    <property type="match status" value="1"/>
</dbReference>
<dbReference type="Pfam" id="PF01134">
    <property type="entry name" value="GIDA"/>
    <property type="match status" value="1"/>
</dbReference>
<dbReference type="Pfam" id="PF21680">
    <property type="entry name" value="GIDA_C_1st"/>
    <property type="match status" value="1"/>
</dbReference>
<dbReference type="Pfam" id="PF13932">
    <property type="entry name" value="SAM_GIDA_C"/>
    <property type="match status" value="1"/>
</dbReference>
<dbReference type="SMART" id="SM01228">
    <property type="entry name" value="GIDA_assoc_3"/>
    <property type="match status" value="1"/>
</dbReference>
<dbReference type="SUPFAM" id="SSF51905">
    <property type="entry name" value="FAD/NAD(P)-binding domain"/>
    <property type="match status" value="1"/>
</dbReference>
<dbReference type="PROSITE" id="PS01280">
    <property type="entry name" value="GIDA_1"/>
    <property type="match status" value="1"/>
</dbReference>
<dbReference type="PROSITE" id="PS01281">
    <property type="entry name" value="GIDA_2"/>
    <property type="match status" value="1"/>
</dbReference>